<sequence length="154" mass="17188">MNTYEGKLQSKNSKIAIIISRFNSFINKNLLDGAIDSLKRIGRLKSENISIFWVPGVCEIPIIVNFLSKQNKYNGLITLGTVIQGKTFHHELISKDFNNIIFNISIKKNIPISVGVLYTRNINQAIERSGTKLGNKGSDAALSVLEMINLLKII</sequence>
<protein>
    <recommendedName>
        <fullName evidence="1">6,7-dimethyl-8-ribityllumazine synthase</fullName>
        <shortName evidence="1">DMRL synthase</shortName>
        <shortName evidence="1">LS</shortName>
        <shortName evidence="1">Lumazine synthase</shortName>
        <ecNumber evidence="1">2.5.1.78</ecNumber>
    </recommendedName>
</protein>
<keyword id="KW-1185">Reference proteome</keyword>
<keyword id="KW-0686">Riboflavin biosynthesis</keyword>
<keyword id="KW-0808">Transferase</keyword>
<reference key="1">
    <citation type="journal article" date="2002" name="Nat. Genet.">
        <title>Genome sequence of the endocellular obligate symbiont of tsetse flies, Wigglesworthia glossinidia.</title>
        <authorList>
            <person name="Akman L."/>
            <person name="Yamashita A."/>
            <person name="Watanabe H."/>
            <person name="Oshima K."/>
            <person name="Shiba T."/>
            <person name="Hattori M."/>
            <person name="Aksoy S."/>
        </authorList>
    </citation>
    <scope>NUCLEOTIDE SEQUENCE [LARGE SCALE GENOMIC DNA]</scope>
</reference>
<proteinExistence type="inferred from homology"/>
<feature type="chain" id="PRO_0000134831" description="6,7-dimethyl-8-ribityllumazine synthase">
    <location>
        <begin position="1"/>
        <end position="154"/>
    </location>
</feature>
<feature type="active site" description="Proton donor" evidence="1">
    <location>
        <position position="89"/>
    </location>
</feature>
<feature type="binding site" evidence="1">
    <location>
        <position position="22"/>
    </location>
    <ligand>
        <name>5-amino-6-(D-ribitylamino)uracil</name>
        <dbReference type="ChEBI" id="CHEBI:15934"/>
    </ligand>
</feature>
<feature type="binding site" evidence="1">
    <location>
        <begin position="57"/>
        <end position="59"/>
    </location>
    <ligand>
        <name>5-amino-6-(D-ribitylamino)uracil</name>
        <dbReference type="ChEBI" id="CHEBI:15934"/>
    </ligand>
</feature>
<feature type="binding site" evidence="1">
    <location>
        <begin position="81"/>
        <end position="83"/>
    </location>
    <ligand>
        <name>5-amino-6-(D-ribitylamino)uracil</name>
        <dbReference type="ChEBI" id="CHEBI:15934"/>
    </ligand>
</feature>
<feature type="binding site" evidence="1">
    <location>
        <begin position="86"/>
        <end position="87"/>
    </location>
    <ligand>
        <name>(2S)-2-hydroxy-3-oxobutyl phosphate</name>
        <dbReference type="ChEBI" id="CHEBI:58830"/>
    </ligand>
</feature>
<feature type="binding site" evidence="1">
    <location>
        <position position="114"/>
    </location>
    <ligand>
        <name>5-amino-6-(D-ribitylamino)uracil</name>
        <dbReference type="ChEBI" id="CHEBI:15934"/>
    </ligand>
</feature>
<feature type="binding site" evidence="1">
    <location>
        <position position="128"/>
    </location>
    <ligand>
        <name>(2S)-2-hydroxy-3-oxobutyl phosphate</name>
        <dbReference type="ChEBI" id="CHEBI:58830"/>
    </ligand>
</feature>
<comment type="function">
    <text evidence="1">Catalyzes the formation of 6,7-dimethyl-8-ribityllumazine by condensation of 5-amino-6-(D-ribitylamino)uracil with 3,4-dihydroxy-2-butanone 4-phosphate. This is the penultimate step in the biosynthesis of riboflavin.</text>
</comment>
<comment type="catalytic activity">
    <reaction evidence="1">
        <text>(2S)-2-hydroxy-3-oxobutyl phosphate + 5-amino-6-(D-ribitylamino)uracil = 6,7-dimethyl-8-(1-D-ribityl)lumazine + phosphate + 2 H2O + H(+)</text>
        <dbReference type="Rhea" id="RHEA:26152"/>
        <dbReference type="ChEBI" id="CHEBI:15377"/>
        <dbReference type="ChEBI" id="CHEBI:15378"/>
        <dbReference type="ChEBI" id="CHEBI:15934"/>
        <dbReference type="ChEBI" id="CHEBI:43474"/>
        <dbReference type="ChEBI" id="CHEBI:58201"/>
        <dbReference type="ChEBI" id="CHEBI:58830"/>
        <dbReference type="EC" id="2.5.1.78"/>
    </reaction>
</comment>
<comment type="pathway">
    <text evidence="1">Cofactor biosynthesis; riboflavin biosynthesis; riboflavin from 2-hydroxy-3-oxobutyl phosphate and 5-amino-6-(D-ribitylamino)uracil: step 1/2.</text>
</comment>
<comment type="subunit">
    <text evidence="1">Forms an icosahedral capsid composed of 60 subunits, arranged as a dodecamer of pentamers.</text>
</comment>
<comment type="similarity">
    <text evidence="1">Belongs to the DMRL synthase family.</text>
</comment>
<gene>
    <name evidence="1" type="primary">ribH</name>
    <name type="ordered locus">WIGBR4630</name>
</gene>
<organism>
    <name type="scientific">Wigglesworthia glossinidia brevipalpis</name>
    <dbReference type="NCBI Taxonomy" id="36870"/>
    <lineage>
        <taxon>Bacteria</taxon>
        <taxon>Pseudomonadati</taxon>
        <taxon>Pseudomonadota</taxon>
        <taxon>Gammaproteobacteria</taxon>
        <taxon>Enterobacterales</taxon>
        <taxon>Erwiniaceae</taxon>
        <taxon>Wigglesworthia</taxon>
    </lineage>
</organism>
<evidence type="ECO:0000255" key="1">
    <source>
        <dbReference type="HAMAP-Rule" id="MF_00178"/>
    </source>
</evidence>
<name>RISB_WIGBR</name>
<accession>Q8D291</accession>
<dbReference type="EC" id="2.5.1.78" evidence="1"/>
<dbReference type="EMBL" id="BA000021">
    <property type="protein sequence ID" value="BAC24609.1"/>
    <property type="molecule type" value="Genomic_DNA"/>
</dbReference>
<dbReference type="SMR" id="Q8D291"/>
<dbReference type="STRING" id="36870.gene:10368966"/>
<dbReference type="KEGG" id="wbr:ribH"/>
<dbReference type="eggNOG" id="COG0054">
    <property type="taxonomic scope" value="Bacteria"/>
</dbReference>
<dbReference type="HOGENOM" id="CLU_089358_1_1_6"/>
<dbReference type="OrthoDB" id="9809709at2"/>
<dbReference type="UniPathway" id="UPA00275">
    <property type="reaction ID" value="UER00404"/>
</dbReference>
<dbReference type="Proteomes" id="UP000000562">
    <property type="component" value="Chromosome"/>
</dbReference>
<dbReference type="GO" id="GO:0005829">
    <property type="term" value="C:cytosol"/>
    <property type="evidence" value="ECO:0007669"/>
    <property type="project" value="TreeGrafter"/>
</dbReference>
<dbReference type="GO" id="GO:0009349">
    <property type="term" value="C:riboflavin synthase complex"/>
    <property type="evidence" value="ECO:0007669"/>
    <property type="project" value="InterPro"/>
</dbReference>
<dbReference type="GO" id="GO:0000906">
    <property type="term" value="F:6,7-dimethyl-8-ribityllumazine synthase activity"/>
    <property type="evidence" value="ECO:0007669"/>
    <property type="project" value="UniProtKB-UniRule"/>
</dbReference>
<dbReference type="GO" id="GO:0009231">
    <property type="term" value="P:riboflavin biosynthetic process"/>
    <property type="evidence" value="ECO:0007669"/>
    <property type="project" value="UniProtKB-UniRule"/>
</dbReference>
<dbReference type="CDD" id="cd09209">
    <property type="entry name" value="Lumazine_synthase-I"/>
    <property type="match status" value="1"/>
</dbReference>
<dbReference type="Gene3D" id="3.40.50.960">
    <property type="entry name" value="Lumazine/riboflavin synthase"/>
    <property type="match status" value="1"/>
</dbReference>
<dbReference type="HAMAP" id="MF_00178">
    <property type="entry name" value="Lumazine_synth"/>
    <property type="match status" value="1"/>
</dbReference>
<dbReference type="InterPro" id="IPR034964">
    <property type="entry name" value="LS"/>
</dbReference>
<dbReference type="InterPro" id="IPR002180">
    <property type="entry name" value="LS/RS"/>
</dbReference>
<dbReference type="InterPro" id="IPR036467">
    <property type="entry name" value="LS/RS_sf"/>
</dbReference>
<dbReference type="NCBIfam" id="TIGR00114">
    <property type="entry name" value="lumazine-synth"/>
    <property type="match status" value="1"/>
</dbReference>
<dbReference type="NCBIfam" id="NF000812">
    <property type="entry name" value="PRK00061.1-4"/>
    <property type="match status" value="1"/>
</dbReference>
<dbReference type="PANTHER" id="PTHR21058:SF0">
    <property type="entry name" value="6,7-DIMETHYL-8-RIBITYLLUMAZINE SYNTHASE"/>
    <property type="match status" value="1"/>
</dbReference>
<dbReference type="PANTHER" id="PTHR21058">
    <property type="entry name" value="6,7-DIMETHYL-8-RIBITYLLUMAZINE SYNTHASE DMRL SYNTHASE LUMAZINE SYNTHASE"/>
    <property type="match status" value="1"/>
</dbReference>
<dbReference type="Pfam" id="PF00885">
    <property type="entry name" value="DMRL_synthase"/>
    <property type="match status" value="1"/>
</dbReference>
<dbReference type="SUPFAM" id="SSF52121">
    <property type="entry name" value="Lumazine synthase"/>
    <property type="match status" value="1"/>
</dbReference>